<sequence length="104" mass="12064">MRTYETVTILKPQLSDNEVAEFLNSAKEFITKAGGEIVSEEKLGRRRFTHEIDHVRDGFYVYLKFRALPAFVKSWDEMAKLNEQILRSIVMLSIEIKAKAQTVK</sequence>
<feature type="chain" id="PRO_1000120751" description="Small ribosomal subunit protein bS6">
    <location>
        <begin position="1"/>
        <end position="104"/>
    </location>
</feature>
<keyword id="KW-1185">Reference proteome</keyword>
<keyword id="KW-0687">Ribonucleoprotein</keyword>
<keyword id="KW-0689">Ribosomal protein</keyword>
<keyword id="KW-0694">RNA-binding</keyword>
<keyword id="KW-0699">rRNA-binding</keyword>
<name>RS6_ELUMP</name>
<protein>
    <recommendedName>
        <fullName evidence="1">Small ribosomal subunit protein bS6</fullName>
    </recommendedName>
    <alternativeName>
        <fullName evidence="2">30S ribosomal protein S6</fullName>
    </alternativeName>
</protein>
<organism>
    <name type="scientific">Elusimicrobium minutum (strain Pei191)</name>
    <dbReference type="NCBI Taxonomy" id="445932"/>
    <lineage>
        <taxon>Bacteria</taxon>
        <taxon>Pseudomonadati</taxon>
        <taxon>Elusimicrobiota</taxon>
        <taxon>Elusimicrobia</taxon>
        <taxon>Elusimicrobiales</taxon>
        <taxon>Elusimicrobiaceae</taxon>
        <taxon>Elusimicrobium</taxon>
    </lineage>
</organism>
<reference key="1">
    <citation type="journal article" date="2009" name="Appl. Environ. Microbiol.">
        <title>Genomic analysis of 'Elusimicrobium minutum,' the first cultivated representative of the phylum 'Elusimicrobia' (formerly termite group 1).</title>
        <authorList>
            <person name="Herlemann D.P.R."/>
            <person name="Geissinger O."/>
            <person name="Ikeda-Ohtsubo W."/>
            <person name="Kunin V."/>
            <person name="Sun H."/>
            <person name="Lapidus A."/>
            <person name="Hugenholtz P."/>
            <person name="Brune A."/>
        </authorList>
    </citation>
    <scope>NUCLEOTIDE SEQUENCE [LARGE SCALE GENOMIC DNA]</scope>
    <source>
        <strain>Pei191</strain>
    </source>
</reference>
<comment type="function">
    <text evidence="1">Binds together with bS18 to 16S ribosomal RNA.</text>
</comment>
<comment type="similarity">
    <text evidence="1">Belongs to the bacterial ribosomal protein bS6 family.</text>
</comment>
<gene>
    <name evidence="1" type="primary">rpsF</name>
    <name type="ordered locus">Emin_1358</name>
</gene>
<dbReference type="EMBL" id="CP001055">
    <property type="protein sequence ID" value="ACC98908.1"/>
    <property type="molecule type" value="Genomic_DNA"/>
</dbReference>
<dbReference type="RefSeq" id="WP_012415523.1">
    <property type="nucleotide sequence ID" value="NC_010644.1"/>
</dbReference>
<dbReference type="SMR" id="B2KEG2"/>
<dbReference type="STRING" id="445932.Emin_1358"/>
<dbReference type="KEGG" id="emi:Emin_1358"/>
<dbReference type="HOGENOM" id="CLU_113441_5_2_0"/>
<dbReference type="OrthoDB" id="9812702at2"/>
<dbReference type="Proteomes" id="UP000001029">
    <property type="component" value="Chromosome"/>
</dbReference>
<dbReference type="GO" id="GO:0005737">
    <property type="term" value="C:cytoplasm"/>
    <property type="evidence" value="ECO:0007669"/>
    <property type="project" value="UniProtKB-ARBA"/>
</dbReference>
<dbReference type="GO" id="GO:1990904">
    <property type="term" value="C:ribonucleoprotein complex"/>
    <property type="evidence" value="ECO:0007669"/>
    <property type="project" value="UniProtKB-KW"/>
</dbReference>
<dbReference type="GO" id="GO:0005840">
    <property type="term" value="C:ribosome"/>
    <property type="evidence" value="ECO:0007669"/>
    <property type="project" value="UniProtKB-KW"/>
</dbReference>
<dbReference type="GO" id="GO:0070181">
    <property type="term" value="F:small ribosomal subunit rRNA binding"/>
    <property type="evidence" value="ECO:0007669"/>
    <property type="project" value="TreeGrafter"/>
</dbReference>
<dbReference type="GO" id="GO:0003735">
    <property type="term" value="F:structural constituent of ribosome"/>
    <property type="evidence" value="ECO:0007669"/>
    <property type="project" value="InterPro"/>
</dbReference>
<dbReference type="GO" id="GO:0006412">
    <property type="term" value="P:translation"/>
    <property type="evidence" value="ECO:0007669"/>
    <property type="project" value="UniProtKB-UniRule"/>
</dbReference>
<dbReference type="CDD" id="cd00473">
    <property type="entry name" value="bS6"/>
    <property type="match status" value="1"/>
</dbReference>
<dbReference type="Gene3D" id="3.30.70.60">
    <property type="match status" value="1"/>
</dbReference>
<dbReference type="HAMAP" id="MF_00360">
    <property type="entry name" value="Ribosomal_bS6"/>
    <property type="match status" value="1"/>
</dbReference>
<dbReference type="InterPro" id="IPR000529">
    <property type="entry name" value="Ribosomal_bS6"/>
</dbReference>
<dbReference type="InterPro" id="IPR035980">
    <property type="entry name" value="Ribosomal_bS6_sf"/>
</dbReference>
<dbReference type="InterPro" id="IPR020814">
    <property type="entry name" value="Ribosomal_S6_plastid/chlpt"/>
</dbReference>
<dbReference type="InterPro" id="IPR014717">
    <property type="entry name" value="Transl_elong_EF1B/ribsomal_bS6"/>
</dbReference>
<dbReference type="NCBIfam" id="TIGR00166">
    <property type="entry name" value="S6"/>
    <property type="match status" value="1"/>
</dbReference>
<dbReference type="PANTHER" id="PTHR21011">
    <property type="entry name" value="MITOCHONDRIAL 28S RIBOSOMAL PROTEIN S6"/>
    <property type="match status" value="1"/>
</dbReference>
<dbReference type="PANTHER" id="PTHR21011:SF1">
    <property type="entry name" value="SMALL RIBOSOMAL SUBUNIT PROTEIN BS6M"/>
    <property type="match status" value="1"/>
</dbReference>
<dbReference type="Pfam" id="PF01250">
    <property type="entry name" value="Ribosomal_S6"/>
    <property type="match status" value="1"/>
</dbReference>
<dbReference type="SUPFAM" id="SSF54995">
    <property type="entry name" value="Ribosomal protein S6"/>
    <property type="match status" value="1"/>
</dbReference>
<evidence type="ECO:0000255" key="1">
    <source>
        <dbReference type="HAMAP-Rule" id="MF_00360"/>
    </source>
</evidence>
<evidence type="ECO:0000305" key="2"/>
<proteinExistence type="inferred from homology"/>
<accession>B2KEG2</accession>